<protein>
    <recommendedName>
        <fullName evidence="1">N-acetyl-gamma-glutamyl-phosphate reductase</fullName>
        <shortName evidence="1">AGPR</shortName>
        <ecNumber evidence="1">1.2.1.38</ecNumber>
    </recommendedName>
    <alternativeName>
        <fullName evidence="1">N-acetyl-glutamate semialdehyde dehydrogenase</fullName>
        <shortName evidence="1">NAGSA dehydrogenase</shortName>
    </alternativeName>
</protein>
<name>ARGC_ALKMQ</name>
<keyword id="KW-0028">Amino-acid biosynthesis</keyword>
<keyword id="KW-0055">Arginine biosynthesis</keyword>
<keyword id="KW-0963">Cytoplasm</keyword>
<keyword id="KW-0521">NADP</keyword>
<keyword id="KW-0560">Oxidoreductase</keyword>
<keyword id="KW-1185">Reference proteome</keyword>
<gene>
    <name evidence="1" type="primary">argC</name>
    <name type="ordered locus">Amet_3383</name>
</gene>
<proteinExistence type="inferred from homology"/>
<reference key="1">
    <citation type="journal article" date="2016" name="Genome Announc.">
        <title>Complete genome sequence of Alkaliphilus metalliredigens strain QYMF, an alkaliphilic and metal-reducing bacterium isolated from borax-contaminated leachate ponds.</title>
        <authorList>
            <person name="Hwang C."/>
            <person name="Copeland A."/>
            <person name="Lucas S."/>
            <person name="Lapidus A."/>
            <person name="Barry K."/>
            <person name="Detter J.C."/>
            <person name="Glavina Del Rio T."/>
            <person name="Hammon N."/>
            <person name="Israni S."/>
            <person name="Dalin E."/>
            <person name="Tice H."/>
            <person name="Pitluck S."/>
            <person name="Chertkov O."/>
            <person name="Brettin T."/>
            <person name="Bruce D."/>
            <person name="Han C."/>
            <person name="Schmutz J."/>
            <person name="Larimer F."/>
            <person name="Land M.L."/>
            <person name="Hauser L."/>
            <person name="Kyrpides N."/>
            <person name="Mikhailova N."/>
            <person name="Ye Q."/>
            <person name="Zhou J."/>
            <person name="Richardson P."/>
            <person name="Fields M.W."/>
        </authorList>
    </citation>
    <scope>NUCLEOTIDE SEQUENCE [LARGE SCALE GENOMIC DNA]</scope>
    <source>
        <strain>QYMF</strain>
    </source>
</reference>
<sequence>MIKAGILGSTGYAGAELVRLLTGHPEVEIQFLDSRSYHGKAYEEVYPSLKNIVKGKCASIDLENDFEGIDILFCALPHGLSQEAVKRMMAKGKRVIDLSADFRITDPKVYEAWYDVRHQALGELGKAVYGLSEIYPKEIQEAQLVANPGCYPTSIALALYPLLKENVISTESIIIDAKSGVSGAGRNLNDGTLFSQCNENIKAYSIGTHRHIPEIEQELSLAAGKEMIIQFTPHLVPMNRGILSTIYTTNIKNVKENDIEAIYAHYYEEKRFVRLLKEGKLPQTKAVSGSNYCDIGFKVDPRTNGLIVVSAIDNLVKGAAGQAVQNMNMMLGLKEYIGLEQMPIWP</sequence>
<organism>
    <name type="scientific">Alkaliphilus metalliredigens (strain QYMF)</name>
    <dbReference type="NCBI Taxonomy" id="293826"/>
    <lineage>
        <taxon>Bacteria</taxon>
        <taxon>Bacillati</taxon>
        <taxon>Bacillota</taxon>
        <taxon>Clostridia</taxon>
        <taxon>Peptostreptococcales</taxon>
        <taxon>Natronincolaceae</taxon>
        <taxon>Alkaliphilus</taxon>
    </lineage>
</organism>
<comment type="function">
    <text evidence="1">Catalyzes the NADPH-dependent reduction of N-acetyl-5-glutamyl phosphate to yield N-acetyl-L-glutamate 5-semialdehyde.</text>
</comment>
<comment type="catalytic activity">
    <reaction evidence="1">
        <text>N-acetyl-L-glutamate 5-semialdehyde + phosphate + NADP(+) = N-acetyl-L-glutamyl 5-phosphate + NADPH + H(+)</text>
        <dbReference type="Rhea" id="RHEA:21588"/>
        <dbReference type="ChEBI" id="CHEBI:15378"/>
        <dbReference type="ChEBI" id="CHEBI:29123"/>
        <dbReference type="ChEBI" id="CHEBI:43474"/>
        <dbReference type="ChEBI" id="CHEBI:57783"/>
        <dbReference type="ChEBI" id="CHEBI:57936"/>
        <dbReference type="ChEBI" id="CHEBI:58349"/>
        <dbReference type="EC" id="1.2.1.38"/>
    </reaction>
</comment>
<comment type="pathway">
    <text evidence="1">Amino-acid biosynthesis; L-arginine biosynthesis; N(2)-acetyl-L-ornithine from L-glutamate: step 3/4.</text>
</comment>
<comment type="subcellular location">
    <subcellularLocation>
        <location evidence="1">Cytoplasm</location>
    </subcellularLocation>
</comment>
<comment type="similarity">
    <text evidence="1">Belongs to the NAGSA dehydrogenase family. Type 1 subfamily.</text>
</comment>
<dbReference type="EC" id="1.2.1.38" evidence="1"/>
<dbReference type="EMBL" id="CP000724">
    <property type="protein sequence ID" value="ABR49511.1"/>
    <property type="molecule type" value="Genomic_DNA"/>
</dbReference>
<dbReference type="RefSeq" id="WP_012064474.1">
    <property type="nucleotide sequence ID" value="NC_009633.1"/>
</dbReference>
<dbReference type="SMR" id="A6TTJ3"/>
<dbReference type="STRING" id="293826.Amet_3383"/>
<dbReference type="KEGG" id="amt:Amet_3383"/>
<dbReference type="eggNOG" id="COG0002">
    <property type="taxonomic scope" value="Bacteria"/>
</dbReference>
<dbReference type="HOGENOM" id="CLU_006384_0_1_9"/>
<dbReference type="OrthoDB" id="9801289at2"/>
<dbReference type="UniPathway" id="UPA00068">
    <property type="reaction ID" value="UER00108"/>
</dbReference>
<dbReference type="Proteomes" id="UP000001572">
    <property type="component" value="Chromosome"/>
</dbReference>
<dbReference type="GO" id="GO:0005737">
    <property type="term" value="C:cytoplasm"/>
    <property type="evidence" value="ECO:0007669"/>
    <property type="project" value="UniProtKB-SubCell"/>
</dbReference>
<dbReference type="GO" id="GO:0003942">
    <property type="term" value="F:N-acetyl-gamma-glutamyl-phosphate reductase activity"/>
    <property type="evidence" value="ECO:0007669"/>
    <property type="project" value="UniProtKB-UniRule"/>
</dbReference>
<dbReference type="GO" id="GO:0051287">
    <property type="term" value="F:NAD binding"/>
    <property type="evidence" value="ECO:0007669"/>
    <property type="project" value="InterPro"/>
</dbReference>
<dbReference type="GO" id="GO:0070401">
    <property type="term" value="F:NADP+ binding"/>
    <property type="evidence" value="ECO:0007669"/>
    <property type="project" value="InterPro"/>
</dbReference>
<dbReference type="GO" id="GO:0006526">
    <property type="term" value="P:L-arginine biosynthetic process"/>
    <property type="evidence" value="ECO:0007669"/>
    <property type="project" value="UniProtKB-UniRule"/>
</dbReference>
<dbReference type="CDD" id="cd23934">
    <property type="entry name" value="AGPR_1_C"/>
    <property type="match status" value="1"/>
</dbReference>
<dbReference type="CDD" id="cd17895">
    <property type="entry name" value="AGPR_1_N"/>
    <property type="match status" value="1"/>
</dbReference>
<dbReference type="FunFam" id="3.30.360.10:FF:000014">
    <property type="entry name" value="N-acetyl-gamma-glutamyl-phosphate reductase"/>
    <property type="match status" value="1"/>
</dbReference>
<dbReference type="Gene3D" id="3.30.360.10">
    <property type="entry name" value="Dihydrodipicolinate Reductase, domain 2"/>
    <property type="match status" value="1"/>
</dbReference>
<dbReference type="Gene3D" id="3.40.50.720">
    <property type="entry name" value="NAD(P)-binding Rossmann-like Domain"/>
    <property type="match status" value="1"/>
</dbReference>
<dbReference type="HAMAP" id="MF_00150">
    <property type="entry name" value="ArgC_type1"/>
    <property type="match status" value="1"/>
</dbReference>
<dbReference type="InterPro" id="IPR023013">
    <property type="entry name" value="AGPR_AS"/>
</dbReference>
<dbReference type="InterPro" id="IPR000706">
    <property type="entry name" value="AGPR_type-1"/>
</dbReference>
<dbReference type="InterPro" id="IPR036291">
    <property type="entry name" value="NAD(P)-bd_dom_sf"/>
</dbReference>
<dbReference type="InterPro" id="IPR050085">
    <property type="entry name" value="NAGSA_dehydrogenase"/>
</dbReference>
<dbReference type="InterPro" id="IPR000534">
    <property type="entry name" value="Semialdehyde_DH_NAD-bd"/>
</dbReference>
<dbReference type="NCBIfam" id="TIGR01850">
    <property type="entry name" value="argC"/>
    <property type="match status" value="1"/>
</dbReference>
<dbReference type="PANTHER" id="PTHR32338:SF10">
    <property type="entry name" value="N-ACETYL-GAMMA-GLUTAMYL-PHOSPHATE REDUCTASE, CHLOROPLASTIC-RELATED"/>
    <property type="match status" value="1"/>
</dbReference>
<dbReference type="PANTHER" id="PTHR32338">
    <property type="entry name" value="N-ACETYL-GAMMA-GLUTAMYL-PHOSPHATE REDUCTASE, CHLOROPLASTIC-RELATED-RELATED"/>
    <property type="match status" value="1"/>
</dbReference>
<dbReference type="Pfam" id="PF01118">
    <property type="entry name" value="Semialdhyde_dh"/>
    <property type="match status" value="1"/>
</dbReference>
<dbReference type="Pfam" id="PF22698">
    <property type="entry name" value="Semialdhyde_dhC_1"/>
    <property type="match status" value="1"/>
</dbReference>
<dbReference type="SMART" id="SM00859">
    <property type="entry name" value="Semialdhyde_dh"/>
    <property type="match status" value="1"/>
</dbReference>
<dbReference type="SUPFAM" id="SSF55347">
    <property type="entry name" value="Glyceraldehyde-3-phosphate dehydrogenase-like, C-terminal domain"/>
    <property type="match status" value="1"/>
</dbReference>
<dbReference type="SUPFAM" id="SSF51735">
    <property type="entry name" value="NAD(P)-binding Rossmann-fold domains"/>
    <property type="match status" value="1"/>
</dbReference>
<dbReference type="PROSITE" id="PS01224">
    <property type="entry name" value="ARGC"/>
    <property type="match status" value="1"/>
</dbReference>
<feature type="chain" id="PRO_1000058152" description="N-acetyl-gamma-glutamyl-phosphate reductase">
    <location>
        <begin position="1"/>
        <end position="346"/>
    </location>
</feature>
<feature type="active site" evidence="1">
    <location>
        <position position="150"/>
    </location>
</feature>
<evidence type="ECO:0000255" key="1">
    <source>
        <dbReference type="HAMAP-Rule" id="MF_00150"/>
    </source>
</evidence>
<accession>A6TTJ3</accession>